<comment type="function">
    <text evidence="6">Promotes guanine-nucleotide exchange on ARF1 and ARF3 and to a lower extent on ARF5 and ARF6. Promotes the activation of ARF1/ARF5/ARF6 through replacement of GDP with GTP. Involved in the regulation of Golgi vesicular transport. Required for the integrity of the endosomal compartment. Involved in trafficking from the trans-Golgi network (TGN) to endosomes and is required for membrane association of the AP-1 complex and GGA1. Seems to be involved in recycling of the transferrin receptor from recycling endosomes to the plasma membrane. Probably is involved in the exit of GABA(A) receptors from the endoplasmic reticulum. Involved in constitutive release of tumor necrosis factor receptor 1 via exosome-like vesicles; the function seems to involve PKA and specifically PRKAR2B. Proposed to act as A kinase-anchoring protein (AKAP) and may mediate crosstalk between Arf and PKA pathways.</text>
</comment>
<comment type="activity regulation">
    <text evidence="1">Inhibited by brefeldin A.</text>
</comment>
<comment type="subunit">
    <text evidence="1 6">Homodimer. Interacts with ARFGEF1/BIG1; both proteins are probably part of the same or very similar macromolecular complexes. Interacts with PRKAR1A, PRKAR2A, PRKAR1B, PRKAR2B, PPP1CC, PDE3A, TNFRSF1A, MYCBP and EXOC7 (By similarity). Interacts with GABRB1, GABRB2 and GABRB3.</text>
</comment>
<comment type="interaction">
    <interactant intactId="EBI-6257913">
        <id>Q7TSU1</id>
    </interactant>
    <interactant intactId="EBI-6257937">
        <id>P63079</id>
        <label>Gabrb3</label>
    </interactant>
    <organismsDiffer>false</organismsDiffer>
    <experiments>3</experiments>
</comment>
<comment type="subcellular location">
    <subcellularLocation>
        <location evidence="1">Cytoplasm</location>
    </subcellularLocation>
    <subcellularLocation>
        <location evidence="1">Membrane</location>
    </subcellularLocation>
    <subcellularLocation>
        <location evidence="1">Golgi apparatus</location>
    </subcellularLocation>
    <subcellularLocation>
        <location evidence="1">Cytoplasm</location>
        <location evidence="1">Perinuclear region</location>
    </subcellularLocation>
    <subcellularLocation>
        <location>Golgi apparatus</location>
        <location>trans-Golgi network</location>
    </subcellularLocation>
    <subcellularLocation>
        <location evidence="1">Endosome</location>
    </subcellularLocation>
    <subcellularLocation>
        <location evidence="1">Cytoplasm</location>
        <location evidence="1">Cytoskeleton</location>
        <location evidence="1">Microtubule organizing center</location>
        <location evidence="1">Centrosome</location>
    </subcellularLocation>
    <subcellularLocation>
        <location>Cell projection</location>
        <location>Dendrite</location>
    </subcellularLocation>
    <subcellularLocation>
        <location>Cytoplasmic vesicle</location>
    </subcellularLocation>
    <subcellularLocation>
        <location>Synapse</location>
    </subcellularLocation>
    <subcellularLocation>
        <location>Cytoplasm</location>
        <location>Cytoskeleton</location>
    </subcellularLocation>
    <text evidence="1">Translocates from cytoplasm to membranes upon cAMP treatment. Localized in recycling endosomes (By similarity).</text>
</comment>
<comment type="tissue specificity">
    <text>Expressed in brain (at protein level).</text>
</comment>
<comment type="PTM">
    <text evidence="1">In vitro phosphorylated by PKA reducing its GEF activity and dephosphorylated by phosphatase PP1.</text>
</comment>
<feature type="chain" id="PRO_0000419333" description="Brefeldin A-inhibited guanine nucleotide-exchange protein 2">
    <location>
        <begin position="1"/>
        <end position="1791"/>
    </location>
</feature>
<feature type="domain" description="SEC7" evidence="4">
    <location>
        <begin position="661"/>
        <end position="792"/>
    </location>
</feature>
<feature type="region of interest" description="DCB; DCB:DCB domain and DCB:HUS domain interaction" evidence="1">
    <location>
        <begin position="2"/>
        <end position="224"/>
    </location>
</feature>
<feature type="region of interest" description="Disordered" evidence="5">
    <location>
        <begin position="208"/>
        <end position="292"/>
    </location>
</feature>
<feature type="region of interest" description="Disordered" evidence="5">
    <location>
        <begin position="311"/>
        <end position="350"/>
    </location>
</feature>
<feature type="region of interest" description="HUS; DCB:HUS domain interaction" evidence="1">
    <location>
        <begin position="515"/>
        <end position="535"/>
    </location>
</feature>
<feature type="compositionally biased region" description="Polar residues" evidence="5">
    <location>
        <begin position="214"/>
        <end position="225"/>
    </location>
</feature>
<feature type="compositionally biased region" description="Polar residues" evidence="5">
    <location>
        <begin position="233"/>
        <end position="243"/>
    </location>
</feature>
<feature type="compositionally biased region" description="Basic and acidic residues" evidence="5">
    <location>
        <begin position="244"/>
        <end position="257"/>
    </location>
</feature>
<feature type="modified residue" description="N-acetylmethionine" evidence="3">
    <location>
        <position position="1"/>
    </location>
</feature>
<feature type="modified residue" description="Phosphoserine" evidence="3">
    <location>
        <position position="214"/>
    </location>
</feature>
<feature type="modified residue" description="Phosphoserine" evidence="7">
    <location>
        <position position="218"/>
    </location>
</feature>
<feature type="modified residue" description="Phosphoserine" evidence="7">
    <location>
        <position position="227"/>
    </location>
</feature>
<feature type="modified residue" description="Phosphothreonine" evidence="3">
    <location>
        <position position="244"/>
    </location>
</feature>
<feature type="modified residue" description="Phosphoserine" evidence="3">
    <location>
        <position position="277"/>
    </location>
</feature>
<feature type="modified residue" description="Phosphoserine" evidence="7">
    <location>
        <position position="355"/>
    </location>
</feature>
<feature type="modified residue" description="Phosphoserine" evidence="7">
    <location>
        <position position="356"/>
    </location>
</feature>
<feature type="modified residue" description="Phosphoserine" evidence="3">
    <location>
        <position position="621"/>
    </location>
</feature>
<feature type="modified residue" description="Phosphothreonine" evidence="2">
    <location>
        <position position="623"/>
    </location>
</feature>
<feature type="modified residue" description="Phosphoserine" evidence="2">
    <location>
        <position position="624"/>
    </location>
</feature>
<feature type="modified residue" description="Phosphothreonine" evidence="2">
    <location>
        <position position="633"/>
    </location>
</feature>
<feature type="modified residue" description="Phosphoserine" evidence="3">
    <location>
        <position position="707"/>
    </location>
</feature>
<feature type="modified residue" description="Phosphoserine" evidence="7">
    <location>
        <position position="1518"/>
    </location>
</feature>
<feature type="modified residue" description="Phosphoserine" evidence="7">
    <location>
        <position position="1520"/>
    </location>
</feature>
<feature type="modified residue" description="Phosphoserine" evidence="7">
    <location>
        <position position="1521"/>
    </location>
</feature>
<feature type="modified residue" description="Phosphoserine" evidence="7">
    <location>
        <position position="1532"/>
    </location>
</feature>
<feature type="modified residue" description="Phosphoserine" evidence="7">
    <location>
        <position position="1535"/>
    </location>
</feature>
<feature type="modified residue" description="Phosphoserine" evidence="7">
    <location>
        <position position="1541"/>
    </location>
</feature>
<feature type="modified residue" description="Phosphoserine" evidence="3">
    <location>
        <position position="1788"/>
    </location>
</feature>
<sequence length="1791" mass="201974">MQESQTKSMFVSRALEKILADKEVKRPQHSQLRRACQVALDEIKAELEKQRLGAAAPPKANFIEADKYFLPFELACQSKSPRVVSTSLDCLQKLIAYGHITGNAPDSGAPGKRLIDRIVETVCNCFQGPQTDEGVQLQIIKALLTAVTSPHIEIHEGTILQTVRTCYNIYLASKNLINQTTAKATLTQMLNVIFTRMENQVLQEARELEKPIQSKPQSPVIQATAGSPKFSRLKQSQAQSKPTTPEKTELPNGDHARSSLGKVNSENGEAHRERGSSISGRAEPSGGSDNGAQEVVKDILEDVVTSAVKEAAEKQGLPEPDQAPGVPECQECTVPPAVDENSQTNGIADDRQSLSSADNLEPDAQGHPVAARFSHILQKDAFLVFRSLCKLSMKPLGEGPPDPKSHELRSKVVSLQLLLSVLQNAGPVFRSHEMFVTAIKQYLCVALSKNGVSSVPDVFELSLAIFLTLLSNFKMHLKMQIEVFFKEIFLNILETSTSSFEHRWMVIQTLTRICADAQCVVDIYVNYDCDLNAANIFERLVNDLSKIAQGRSGHELGMTPLQELSLRKKGLECLVSILKCMVEWSKDLYVNPNHQATLGQERLPDQEMGDGKGLDMARRCSVTSVESTVSSGTQTAIPDDPEQFEVIKQQKEIIEHGIELFNKKPKRGIQFLQEQGMLGAAVEDIAQFLHQEERLDSTQVGEFLGDSTRFNKEVMYAYVDQLDFCEKEFVSALRTFLEGFRLPGEAQKIDRLMEKFAARYIECNQGQTLFASADTAYVLAYSIIMLTTDLHSPQVKNKMTKEQYIKMNRGINDSKDLPEEYLSSIYEEIEGKKIAMKETKEHTMATKSTKQNVASEKQRRLLYNVEMEQMAKTAKALMEAVSHAKAPFTSATHLDHVRPMFKLVWTPLLAAYSIGLQNCDDTEVASLCLEGIRCAVRIACIFGMQLERDAYVQALARFSLLTASSSITEMKQKNIDTIKTLITVAHTDGNYLGNSWHEILKCISQLELAQLIGTGVKTRYLSGSGREREGSLKGHSLAGEEFMGLGLGNLVSGGVDKRQMASFQESVGETSSQSVVVAVDRIFTGSTRLDGNAIVDFVRWLCAVSMDELASPHHPRMFSLQKIVEISYYNMNRIRLQWSRIWHVIGDHFNKVGCNPNEDVAIFAVDSLRQLSMKFLEKGELANFRFQKDFLRPFEHIMKKNRSPTIRDMVIRCIAQMVSSQAANIRSGWKNIFAVFHQAASDHDGNIVELAFQTTGHIVSTIFQHHFPAAIDSFQDAVKCLSEFACNAAFPDTSMEAIRLIRFCGKYVSERPRVLQEYTSDDMNVAPGDRVWVRGWFPILFELSCIINRCKLDVRTRGLTVMFEIMKSYGHTFAKHWWQDLFRIVFRIFDNMKLPEQQSEKSEWMTTTCNHALYAICDVFTQFYEALHEVLLSDVFAQLQWCVKQDNEQLARSGTNCLENLVISNGEKFSPAVWDETCNCMLDIFRTTIPHVLLTWRPAGMEEEVSDRHLDVDLDRQSLSSIDRNASERGQSQLSNPTDDSWKGAPYANQKLLASLLIKCVVQLELIQTIDNIVFYPATSKKEDAEHMVAAQQDTLDADIHIETENQGMYKFMSSQHLFKLLDCLQESHSFSKAFNSNYEQRTVLWRAGFKGKSKPNLLKQETSSLACCLRILFRMYVDENRRDSWGEIQQRLLTVCSEALAYFITVNSESHREAWTSLLLLLLTKTLKINDEKFKAHASVYYPYLCEMMQFDLIPELRAVLRKFFLRIGLVYKIWVPEEPSQVPAASTAW</sequence>
<keyword id="KW-0007">Acetylation</keyword>
<keyword id="KW-0966">Cell projection</keyword>
<keyword id="KW-0963">Cytoplasm</keyword>
<keyword id="KW-0968">Cytoplasmic vesicle</keyword>
<keyword id="KW-0206">Cytoskeleton</keyword>
<keyword id="KW-0225">Disease variant</keyword>
<keyword id="KW-0967">Endosome</keyword>
<keyword id="KW-0333">Golgi apparatus</keyword>
<keyword id="KW-0344">Guanine-nucleotide releasing factor</keyword>
<keyword id="KW-0472">Membrane</keyword>
<keyword id="KW-0597">Phosphoprotein</keyword>
<keyword id="KW-0653">Protein transport</keyword>
<keyword id="KW-1185">Reference proteome</keyword>
<keyword id="KW-0770">Synapse</keyword>
<keyword id="KW-0813">Transport</keyword>
<accession>Q7TSU1</accession>
<proteinExistence type="evidence at protein level"/>
<dbReference type="EMBL" id="AY255526">
    <property type="protein sequence ID" value="AAP04588.2"/>
    <property type="molecule type" value="mRNA"/>
</dbReference>
<dbReference type="EMBL" id="AABR06027654">
    <property type="status" value="NOT_ANNOTATED_CDS"/>
    <property type="molecule type" value="Genomic_DNA"/>
</dbReference>
<dbReference type="EMBL" id="AABR06027655">
    <property type="status" value="NOT_ANNOTATED_CDS"/>
    <property type="molecule type" value="Genomic_DNA"/>
</dbReference>
<dbReference type="EMBL" id="AABR06027656">
    <property type="status" value="NOT_ANNOTATED_CDS"/>
    <property type="molecule type" value="Genomic_DNA"/>
</dbReference>
<dbReference type="RefSeq" id="NP_851597.2">
    <property type="nucleotide sequence ID" value="NM_181083.2"/>
</dbReference>
<dbReference type="SMR" id="Q7TSU1"/>
<dbReference type="FunCoup" id="Q7TSU1">
    <property type="interactions" value="4834"/>
</dbReference>
<dbReference type="IntAct" id="Q7TSU1">
    <property type="interactions" value="9"/>
</dbReference>
<dbReference type="STRING" id="10116.ENSRNOP00000010054"/>
<dbReference type="iPTMnet" id="Q7TSU1"/>
<dbReference type="PhosphoSitePlus" id="Q7TSU1"/>
<dbReference type="jPOST" id="Q7TSU1"/>
<dbReference type="PaxDb" id="10116-ENSRNOP00000010054"/>
<dbReference type="Ensembl" id="ENSRNOT00000010054.6">
    <property type="protein sequence ID" value="ENSRNOP00000010054.4"/>
    <property type="gene ID" value="ENSRNOG00000007485.6"/>
</dbReference>
<dbReference type="GeneID" id="296380"/>
<dbReference type="KEGG" id="rno:296380"/>
<dbReference type="UCSC" id="RGD:631430">
    <property type="organism name" value="rat"/>
</dbReference>
<dbReference type="AGR" id="RGD:631430"/>
<dbReference type="CTD" id="10564"/>
<dbReference type="RGD" id="631430">
    <property type="gene designation" value="Arfgef2"/>
</dbReference>
<dbReference type="eggNOG" id="KOG0929">
    <property type="taxonomic scope" value="Eukaryota"/>
</dbReference>
<dbReference type="GeneTree" id="ENSGT00940000158950"/>
<dbReference type="HOGENOM" id="CLU_000691_1_1_1"/>
<dbReference type="InParanoid" id="Q7TSU1"/>
<dbReference type="OMA" id="FWKSNEM"/>
<dbReference type="OrthoDB" id="18431at2759"/>
<dbReference type="PhylomeDB" id="Q7TSU1"/>
<dbReference type="TreeFam" id="TF300714"/>
<dbReference type="PRO" id="PR:Q7TSU1"/>
<dbReference type="Proteomes" id="UP000002494">
    <property type="component" value="Chromosome 3"/>
</dbReference>
<dbReference type="Bgee" id="ENSRNOG00000007485">
    <property type="expression patterns" value="Expressed in adult mammalian kidney and 19 other cell types or tissues"/>
</dbReference>
<dbReference type="GO" id="GO:0032279">
    <property type="term" value="C:asymmetric synapse"/>
    <property type="evidence" value="ECO:0000314"/>
    <property type="project" value="UniProtKB"/>
</dbReference>
<dbReference type="GO" id="GO:0005879">
    <property type="term" value="C:axonemal microtubule"/>
    <property type="evidence" value="ECO:0000314"/>
    <property type="project" value="UniProtKB"/>
</dbReference>
<dbReference type="GO" id="GO:0005813">
    <property type="term" value="C:centrosome"/>
    <property type="evidence" value="ECO:0007669"/>
    <property type="project" value="UniProtKB-SubCell"/>
</dbReference>
<dbReference type="GO" id="GO:0031410">
    <property type="term" value="C:cytoplasmic vesicle"/>
    <property type="evidence" value="ECO:0000314"/>
    <property type="project" value="UniProtKB"/>
</dbReference>
<dbReference type="GO" id="GO:0005829">
    <property type="term" value="C:cytosol"/>
    <property type="evidence" value="ECO:0000266"/>
    <property type="project" value="RGD"/>
</dbReference>
<dbReference type="GO" id="GO:0043197">
    <property type="term" value="C:dendritic spine"/>
    <property type="evidence" value="ECO:0000314"/>
    <property type="project" value="UniProtKB"/>
</dbReference>
<dbReference type="GO" id="GO:0098982">
    <property type="term" value="C:GABA-ergic synapse"/>
    <property type="evidence" value="ECO:0000314"/>
    <property type="project" value="SynGO"/>
</dbReference>
<dbReference type="GO" id="GO:0098978">
    <property type="term" value="C:glutamatergic synapse"/>
    <property type="evidence" value="ECO:0000314"/>
    <property type="project" value="SynGO"/>
</dbReference>
<dbReference type="GO" id="GO:0000139">
    <property type="term" value="C:Golgi membrane"/>
    <property type="evidence" value="ECO:0000250"/>
    <property type="project" value="UniProtKB"/>
</dbReference>
<dbReference type="GO" id="GO:0016020">
    <property type="term" value="C:membrane"/>
    <property type="evidence" value="ECO:0000266"/>
    <property type="project" value="RGD"/>
</dbReference>
<dbReference type="GO" id="GO:0005815">
    <property type="term" value="C:microtubule organizing center"/>
    <property type="evidence" value="ECO:0000250"/>
    <property type="project" value="UniProtKB"/>
</dbReference>
<dbReference type="GO" id="GO:0048471">
    <property type="term" value="C:perinuclear region of cytoplasm"/>
    <property type="evidence" value="ECO:0007669"/>
    <property type="project" value="UniProtKB-SubCell"/>
</dbReference>
<dbReference type="GO" id="GO:0098794">
    <property type="term" value="C:postsynapse"/>
    <property type="evidence" value="ECO:0000314"/>
    <property type="project" value="SynGO"/>
</dbReference>
<dbReference type="GO" id="GO:0098793">
    <property type="term" value="C:presynapse"/>
    <property type="evidence" value="ECO:0000314"/>
    <property type="project" value="SynGO"/>
</dbReference>
<dbReference type="GO" id="GO:0055037">
    <property type="term" value="C:recycling endosome"/>
    <property type="evidence" value="ECO:0000250"/>
    <property type="project" value="UniProtKB"/>
</dbReference>
<dbReference type="GO" id="GO:0032280">
    <property type="term" value="C:symmetric synapse"/>
    <property type="evidence" value="ECO:0000314"/>
    <property type="project" value="UniProtKB"/>
</dbReference>
<dbReference type="GO" id="GO:0005802">
    <property type="term" value="C:trans-Golgi network"/>
    <property type="evidence" value="ECO:0000314"/>
    <property type="project" value="UniProtKB"/>
</dbReference>
<dbReference type="GO" id="GO:0050811">
    <property type="term" value="F:GABA receptor binding"/>
    <property type="evidence" value="ECO:0000315"/>
    <property type="project" value="RGD"/>
</dbReference>
<dbReference type="GO" id="GO:0005085">
    <property type="term" value="F:guanyl-nucleotide exchange factor activity"/>
    <property type="evidence" value="ECO:0000250"/>
    <property type="project" value="UniProtKB"/>
</dbReference>
<dbReference type="GO" id="GO:0017022">
    <property type="term" value="F:myosin binding"/>
    <property type="evidence" value="ECO:0000353"/>
    <property type="project" value="UniProtKB"/>
</dbReference>
<dbReference type="GO" id="GO:0034237">
    <property type="term" value="F:protein kinase A regulatory subunit binding"/>
    <property type="evidence" value="ECO:0000250"/>
    <property type="project" value="UniProtKB"/>
</dbReference>
<dbReference type="GO" id="GO:0010256">
    <property type="term" value="P:endomembrane system organization"/>
    <property type="evidence" value="ECO:0000250"/>
    <property type="project" value="UniProtKB"/>
</dbReference>
<dbReference type="GO" id="GO:0007032">
    <property type="term" value="P:endosome organization"/>
    <property type="evidence" value="ECO:0000250"/>
    <property type="project" value="UniProtKB"/>
</dbReference>
<dbReference type="GO" id="GO:0006887">
    <property type="term" value="P:exocytosis"/>
    <property type="evidence" value="ECO:0000315"/>
    <property type="project" value="RGD"/>
</dbReference>
<dbReference type="GO" id="GO:0006893">
    <property type="term" value="P:Golgi to plasma membrane transport"/>
    <property type="evidence" value="ECO:0000250"/>
    <property type="project" value="UniProtKB"/>
</dbReference>
<dbReference type="GO" id="GO:0035556">
    <property type="term" value="P:intracellular signal transduction"/>
    <property type="evidence" value="ECO:0000266"/>
    <property type="project" value="RGD"/>
</dbReference>
<dbReference type="GO" id="GO:0032760">
    <property type="term" value="P:positive regulation of tumor necrosis factor production"/>
    <property type="evidence" value="ECO:0000250"/>
    <property type="project" value="UniProtKB"/>
</dbReference>
<dbReference type="GO" id="GO:0015031">
    <property type="term" value="P:protein transport"/>
    <property type="evidence" value="ECO:0007669"/>
    <property type="project" value="UniProtKB-KW"/>
</dbReference>
<dbReference type="GO" id="GO:0001881">
    <property type="term" value="P:receptor recycling"/>
    <property type="evidence" value="ECO:0000250"/>
    <property type="project" value="UniProtKB"/>
</dbReference>
<dbReference type="GO" id="GO:0032012">
    <property type="term" value="P:regulation of ARF protein signal transduction"/>
    <property type="evidence" value="ECO:0007669"/>
    <property type="project" value="InterPro"/>
</dbReference>
<dbReference type="CDD" id="cd00171">
    <property type="entry name" value="Sec7"/>
    <property type="match status" value="1"/>
</dbReference>
<dbReference type="FunFam" id="1.25.10.10:FF:000143">
    <property type="entry name" value="ADP-ribosylation factor guanine nucleotide-exchange factor 2 (brefeldin A-inhibited)"/>
    <property type="match status" value="1"/>
</dbReference>
<dbReference type="FunFam" id="1.10.1000.11:FF:000003">
    <property type="entry name" value="Brefeldin A-inhibited guanine nucleotide-exchange protein 1"/>
    <property type="match status" value="1"/>
</dbReference>
<dbReference type="FunFam" id="1.10.220.20:FF:000002">
    <property type="entry name" value="Brefeldin A-inhibited guanine nucleotide-exchange protein 1"/>
    <property type="match status" value="1"/>
</dbReference>
<dbReference type="Gene3D" id="1.10.220.20">
    <property type="match status" value="1"/>
</dbReference>
<dbReference type="Gene3D" id="1.10.1000.11">
    <property type="entry name" value="Arf Nucleotide-binding Site Opener,domain 2"/>
    <property type="match status" value="1"/>
</dbReference>
<dbReference type="InterPro" id="IPR016024">
    <property type="entry name" value="ARM-type_fold"/>
</dbReference>
<dbReference type="InterPro" id="IPR032629">
    <property type="entry name" value="DCB_dom"/>
</dbReference>
<dbReference type="InterPro" id="IPR015403">
    <property type="entry name" value="Mon2/Sec7/BIG1-like_HDS"/>
</dbReference>
<dbReference type="InterPro" id="IPR032691">
    <property type="entry name" value="Mon2/Sec7/BIG1-like_HUS"/>
</dbReference>
<dbReference type="InterPro" id="IPR046455">
    <property type="entry name" value="Sec7/BIG1-like_C"/>
</dbReference>
<dbReference type="InterPro" id="IPR023394">
    <property type="entry name" value="Sec7_C_sf"/>
</dbReference>
<dbReference type="InterPro" id="IPR000904">
    <property type="entry name" value="Sec7_dom"/>
</dbReference>
<dbReference type="InterPro" id="IPR035999">
    <property type="entry name" value="Sec7_dom_sf"/>
</dbReference>
<dbReference type="PANTHER" id="PTHR10663:SF124">
    <property type="entry name" value="BREFELDIN A-INHIBITED GUANINE NUCLEOTIDE-EXCHANGE PROTEIN 2"/>
    <property type="match status" value="1"/>
</dbReference>
<dbReference type="PANTHER" id="PTHR10663">
    <property type="entry name" value="GUANYL-NUCLEOTIDE EXCHANGE FACTOR"/>
    <property type="match status" value="1"/>
</dbReference>
<dbReference type="Pfam" id="PF20252">
    <property type="entry name" value="BIG2_C"/>
    <property type="match status" value="1"/>
</dbReference>
<dbReference type="Pfam" id="PF16213">
    <property type="entry name" value="DCB"/>
    <property type="match status" value="1"/>
</dbReference>
<dbReference type="Pfam" id="PF01369">
    <property type="entry name" value="Sec7"/>
    <property type="match status" value="1"/>
</dbReference>
<dbReference type="Pfam" id="PF09324">
    <property type="entry name" value="Sec7-like_HDS"/>
    <property type="match status" value="1"/>
</dbReference>
<dbReference type="Pfam" id="PF12783">
    <property type="entry name" value="Sec7-like_HUS"/>
    <property type="match status" value="1"/>
</dbReference>
<dbReference type="SMART" id="SM00222">
    <property type="entry name" value="Sec7"/>
    <property type="match status" value="1"/>
</dbReference>
<dbReference type="SUPFAM" id="SSF48371">
    <property type="entry name" value="ARM repeat"/>
    <property type="match status" value="1"/>
</dbReference>
<dbReference type="SUPFAM" id="SSF48425">
    <property type="entry name" value="Sec7 domain"/>
    <property type="match status" value="1"/>
</dbReference>
<dbReference type="PROSITE" id="PS50190">
    <property type="entry name" value="SEC7"/>
    <property type="match status" value="1"/>
</dbReference>
<name>BIG2_RAT</name>
<protein>
    <recommendedName>
        <fullName>Brefeldin A-inhibited guanine nucleotide-exchange protein 2</fullName>
        <shortName>Brefeldin A-inhibited GEP 2</shortName>
    </recommendedName>
    <alternativeName>
        <fullName>ADP-ribosylation factor guanine nucleotide-exchange factor 2</fullName>
    </alternativeName>
</protein>
<organism>
    <name type="scientific">Rattus norvegicus</name>
    <name type="common">Rat</name>
    <dbReference type="NCBI Taxonomy" id="10116"/>
    <lineage>
        <taxon>Eukaryota</taxon>
        <taxon>Metazoa</taxon>
        <taxon>Chordata</taxon>
        <taxon>Craniata</taxon>
        <taxon>Vertebrata</taxon>
        <taxon>Euteleostomi</taxon>
        <taxon>Mammalia</taxon>
        <taxon>Eutheria</taxon>
        <taxon>Euarchontoglires</taxon>
        <taxon>Glires</taxon>
        <taxon>Rodentia</taxon>
        <taxon>Myomorpha</taxon>
        <taxon>Muroidea</taxon>
        <taxon>Muridae</taxon>
        <taxon>Murinae</taxon>
        <taxon>Rattus</taxon>
    </lineage>
</organism>
<gene>
    <name type="primary">Arfgef2</name>
    <name type="synonym">Arfgep2</name>
    <name type="synonym">Big2</name>
</gene>
<evidence type="ECO:0000250" key="1"/>
<evidence type="ECO:0000250" key="2">
    <source>
        <dbReference type="UniProtKB" id="A2A5R2"/>
    </source>
</evidence>
<evidence type="ECO:0000250" key="3">
    <source>
        <dbReference type="UniProtKB" id="Q9Y6D5"/>
    </source>
</evidence>
<evidence type="ECO:0000255" key="4">
    <source>
        <dbReference type="PROSITE-ProRule" id="PRU00189"/>
    </source>
</evidence>
<evidence type="ECO:0000256" key="5">
    <source>
        <dbReference type="SAM" id="MobiDB-lite"/>
    </source>
</evidence>
<evidence type="ECO:0000269" key="6">
    <source>
    </source>
</evidence>
<evidence type="ECO:0007744" key="7">
    <source>
    </source>
</evidence>
<reference key="1">
    <citation type="journal article" date="2004" name="J. Neurochem.">
        <title>The brefeldin A-inhibited GDP/GTP exchange factor 2, a protein involved in vesicular trafficking, interacts with the beta subunits of the GABA receptors.</title>
        <authorList>
            <person name="Charych E.I."/>
            <person name="Yu W."/>
            <person name="Miralles C.P."/>
            <person name="Serwanski D.R."/>
            <person name="Li X."/>
            <person name="Rubio M."/>
            <person name="De Blas A.L."/>
        </authorList>
    </citation>
    <scope>NUCLEOTIDE SEQUENCE [MRNA]</scope>
    <scope>FUNCTION</scope>
    <scope>SUBCELLULAR LOCATION</scope>
    <scope>INTERACTION WITH GABRB1; GABRB2 AND GABRB3</scope>
    <source>
        <strain>Sprague-Dawley</strain>
    </source>
</reference>
<reference key="2">
    <citation type="journal article" date="2004" name="Nature">
        <title>Genome sequence of the Brown Norway rat yields insights into mammalian evolution.</title>
        <authorList>
            <person name="Gibbs R.A."/>
            <person name="Weinstock G.M."/>
            <person name="Metzker M.L."/>
            <person name="Muzny D.M."/>
            <person name="Sodergren E.J."/>
            <person name="Scherer S."/>
            <person name="Scott G."/>
            <person name="Steffen D."/>
            <person name="Worley K.C."/>
            <person name="Burch P.E."/>
            <person name="Okwuonu G."/>
            <person name="Hines S."/>
            <person name="Lewis L."/>
            <person name="Deramo C."/>
            <person name="Delgado O."/>
            <person name="Dugan-Rocha S."/>
            <person name="Miner G."/>
            <person name="Morgan M."/>
            <person name="Hawes A."/>
            <person name="Gill R."/>
            <person name="Holt R.A."/>
            <person name="Adams M.D."/>
            <person name="Amanatides P.G."/>
            <person name="Baden-Tillson H."/>
            <person name="Barnstead M."/>
            <person name="Chin S."/>
            <person name="Evans C.A."/>
            <person name="Ferriera S."/>
            <person name="Fosler C."/>
            <person name="Glodek A."/>
            <person name="Gu Z."/>
            <person name="Jennings D."/>
            <person name="Kraft C.L."/>
            <person name="Nguyen T."/>
            <person name="Pfannkoch C.M."/>
            <person name="Sitter C."/>
            <person name="Sutton G.G."/>
            <person name="Venter J.C."/>
            <person name="Woodage T."/>
            <person name="Smith D."/>
            <person name="Lee H.-M."/>
            <person name="Gustafson E."/>
            <person name="Cahill P."/>
            <person name="Kana A."/>
            <person name="Doucette-Stamm L."/>
            <person name="Weinstock K."/>
            <person name="Fechtel K."/>
            <person name="Weiss R.B."/>
            <person name="Dunn D.M."/>
            <person name="Green E.D."/>
            <person name="Blakesley R.W."/>
            <person name="Bouffard G.G."/>
            <person name="De Jong P.J."/>
            <person name="Osoegawa K."/>
            <person name="Zhu B."/>
            <person name="Marra M."/>
            <person name="Schein J."/>
            <person name="Bosdet I."/>
            <person name="Fjell C."/>
            <person name="Jones S."/>
            <person name="Krzywinski M."/>
            <person name="Mathewson C."/>
            <person name="Siddiqui A."/>
            <person name="Wye N."/>
            <person name="McPherson J."/>
            <person name="Zhao S."/>
            <person name="Fraser C.M."/>
            <person name="Shetty J."/>
            <person name="Shatsman S."/>
            <person name="Geer K."/>
            <person name="Chen Y."/>
            <person name="Abramzon S."/>
            <person name="Nierman W.C."/>
            <person name="Havlak P.H."/>
            <person name="Chen R."/>
            <person name="Durbin K.J."/>
            <person name="Egan A."/>
            <person name="Ren Y."/>
            <person name="Song X.-Z."/>
            <person name="Li B."/>
            <person name="Liu Y."/>
            <person name="Qin X."/>
            <person name="Cawley S."/>
            <person name="Cooney A.J."/>
            <person name="D'Souza L.M."/>
            <person name="Martin K."/>
            <person name="Wu J.Q."/>
            <person name="Gonzalez-Garay M.L."/>
            <person name="Jackson A.R."/>
            <person name="Kalafus K.J."/>
            <person name="McLeod M.P."/>
            <person name="Milosavljevic A."/>
            <person name="Virk D."/>
            <person name="Volkov A."/>
            <person name="Wheeler D.A."/>
            <person name="Zhang Z."/>
            <person name="Bailey J.A."/>
            <person name="Eichler E.E."/>
            <person name="Tuzun E."/>
            <person name="Birney E."/>
            <person name="Mongin E."/>
            <person name="Ureta-Vidal A."/>
            <person name="Woodwark C."/>
            <person name="Zdobnov E."/>
            <person name="Bork P."/>
            <person name="Suyama M."/>
            <person name="Torrents D."/>
            <person name="Alexandersson M."/>
            <person name="Trask B.J."/>
            <person name="Young J.M."/>
            <person name="Huang H."/>
            <person name="Wang H."/>
            <person name="Xing H."/>
            <person name="Daniels S."/>
            <person name="Gietzen D."/>
            <person name="Schmidt J."/>
            <person name="Stevens K."/>
            <person name="Vitt U."/>
            <person name="Wingrove J."/>
            <person name="Camara F."/>
            <person name="Mar Alba M."/>
            <person name="Abril J.F."/>
            <person name="Guigo R."/>
            <person name="Smit A."/>
            <person name="Dubchak I."/>
            <person name="Rubin E.M."/>
            <person name="Couronne O."/>
            <person name="Poliakov A."/>
            <person name="Huebner N."/>
            <person name="Ganten D."/>
            <person name="Goesele C."/>
            <person name="Hummel O."/>
            <person name="Kreitler T."/>
            <person name="Lee Y.-A."/>
            <person name="Monti J."/>
            <person name="Schulz H."/>
            <person name="Zimdahl H."/>
            <person name="Himmelbauer H."/>
            <person name="Lehrach H."/>
            <person name="Jacob H.J."/>
            <person name="Bromberg S."/>
            <person name="Gullings-Handley J."/>
            <person name="Jensen-Seaman M.I."/>
            <person name="Kwitek A.E."/>
            <person name="Lazar J."/>
            <person name="Pasko D."/>
            <person name="Tonellato P.J."/>
            <person name="Twigger S."/>
            <person name="Ponting C.P."/>
            <person name="Duarte J.M."/>
            <person name="Rice S."/>
            <person name="Goodstadt L."/>
            <person name="Beatson S.A."/>
            <person name="Emes R.D."/>
            <person name="Winter E.E."/>
            <person name="Webber C."/>
            <person name="Brandt P."/>
            <person name="Nyakatura G."/>
            <person name="Adetobi M."/>
            <person name="Chiaromonte F."/>
            <person name="Elnitski L."/>
            <person name="Eswara P."/>
            <person name="Hardison R.C."/>
            <person name="Hou M."/>
            <person name="Kolbe D."/>
            <person name="Makova K."/>
            <person name="Miller W."/>
            <person name="Nekrutenko A."/>
            <person name="Riemer C."/>
            <person name="Schwartz S."/>
            <person name="Taylor J."/>
            <person name="Yang S."/>
            <person name="Zhang Y."/>
            <person name="Lindpaintner K."/>
            <person name="Andrews T.D."/>
            <person name="Caccamo M."/>
            <person name="Clamp M."/>
            <person name="Clarke L."/>
            <person name="Curwen V."/>
            <person name="Durbin R.M."/>
            <person name="Eyras E."/>
            <person name="Searle S.M."/>
            <person name="Cooper G.M."/>
            <person name="Batzoglou S."/>
            <person name="Brudno M."/>
            <person name="Sidow A."/>
            <person name="Stone E.A."/>
            <person name="Payseur B.A."/>
            <person name="Bourque G."/>
            <person name="Lopez-Otin C."/>
            <person name="Puente X.S."/>
            <person name="Chakrabarti K."/>
            <person name="Chatterji S."/>
            <person name="Dewey C."/>
            <person name="Pachter L."/>
            <person name="Bray N."/>
            <person name="Yap V.B."/>
            <person name="Caspi A."/>
            <person name="Tesler G."/>
            <person name="Pevzner P.A."/>
            <person name="Haussler D."/>
            <person name="Roskin K.M."/>
            <person name="Baertsch R."/>
            <person name="Clawson H."/>
            <person name="Furey T.S."/>
            <person name="Hinrichs A.S."/>
            <person name="Karolchik D."/>
            <person name="Kent W.J."/>
            <person name="Rosenbloom K.R."/>
            <person name="Trumbower H."/>
            <person name="Weirauch M."/>
            <person name="Cooper D.N."/>
            <person name="Stenson P.D."/>
            <person name="Ma B."/>
            <person name="Brent M."/>
            <person name="Arumugam M."/>
            <person name="Shteynberg D."/>
            <person name="Copley R.R."/>
            <person name="Taylor M.S."/>
            <person name="Riethman H."/>
            <person name="Mudunuri U."/>
            <person name="Peterson J."/>
            <person name="Guyer M."/>
            <person name="Felsenfeld A."/>
            <person name="Old S."/>
            <person name="Mockrin S."/>
            <person name="Collins F.S."/>
        </authorList>
    </citation>
    <scope>NUCLEOTIDE SEQUENCE [LARGE SCALE GENOMIC DNA]</scope>
    <source>
        <strain>Brown Norway</strain>
    </source>
</reference>
<reference key="3">
    <citation type="journal article" date="2002" name="Mol. Biol. Cell">
        <title>Localization of large ADP-ribosylation factor-guanine nucleotide exchange factors to different Golgi compartments: evidence for distinct functions in protein traffic.</title>
        <authorList>
            <person name="Zhao X."/>
            <person name="Lasell T.K."/>
            <person name="Melancon P."/>
        </authorList>
    </citation>
    <scope>SUBCELLULAR LOCATION</scope>
</reference>
<reference key="4">
    <citation type="journal article" date="2012" name="Nat. Commun.">
        <title>Quantitative maps of protein phosphorylation sites across 14 different rat organs and tissues.</title>
        <authorList>
            <person name="Lundby A."/>
            <person name="Secher A."/>
            <person name="Lage K."/>
            <person name="Nordsborg N.B."/>
            <person name="Dmytriyev A."/>
            <person name="Lundby C."/>
            <person name="Olsen J.V."/>
        </authorList>
    </citation>
    <scope>PHOSPHORYLATION [LARGE SCALE ANALYSIS] AT SER-218; SER-227; SER-355; SER-356; SER-1518; SER-1520; SER-1521; SER-1532; SER-1535 AND SER-1541</scope>
    <scope>IDENTIFICATION BY MASS SPECTROMETRY [LARGE SCALE ANALYSIS]</scope>
</reference>